<evidence type="ECO:0000255" key="1">
    <source>
        <dbReference type="HAMAP-Rule" id="MF_02054"/>
    </source>
</evidence>
<evidence type="ECO:0000255" key="2">
    <source>
        <dbReference type="PROSITE-ProRule" id="PRU01246"/>
    </source>
</evidence>
<evidence type="ECO:0000255" key="3">
    <source>
        <dbReference type="PROSITE-ProRule" id="PRU01248"/>
    </source>
</evidence>
<evidence type="ECO:0000269" key="4">
    <source>
    </source>
</evidence>
<evidence type="ECO:0000303" key="5">
    <source>
    </source>
</evidence>
<evidence type="ECO:0000305" key="6"/>
<evidence type="ECO:0000312" key="7">
    <source>
        <dbReference type="EMBL" id="AAD07734.1"/>
    </source>
</evidence>
<evidence type="ECO:0007829" key="8">
    <source>
        <dbReference type="PDB" id="5JK0"/>
    </source>
</evidence>
<reference key="1">
    <citation type="journal article" date="1997" name="Nature">
        <title>The complete genome sequence of the gastric pathogen Helicobacter pylori.</title>
        <authorList>
            <person name="Tomb J.-F."/>
            <person name="White O."/>
            <person name="Kerlavage A.R."/>
            <person name="Clayton R.A."/>
            <person name="Sutton G.G."/>
            <person name="Fleischmann R.D."/>
            <person name="Ketchum K.A."/>
            <person name="Klenk H.-P."/>
            <person name="Gill S.R."/>
            <person name="Dougherty B.A."/>
            <person name="Nelson K.E."/>
            <person name="Quackenbush J."/>
            <person name="Zhou L."/>
            <person name="Kirkness E.F."/>
            <person name="Peterson S.N."/>
            <person name="Loftus B.J."/>
            <person name="Richardson D.L."/>
            <person name="Dodson R.J."/>
            <person name="Khalak H.G."/>
            <person name="Glodek A."/>
            <person name="McKenney K."/>
            <person name="FitzGerald L.M."/>
            <person name="Lee N."/>
            <person name="Adams M.D."/>
            <person name="Hickey E.K."/>
            <person name="Berg D.E."/>
            <person name="Gocayne J.D."/>
            <person name="Utterback T.R."/>
            <person name="Peterson J.D."/>
            <person name="Kelley J.M."/>
            <person name="Cotton M.D."/>
            <person name="Weidman J.F."/>
            <person name="Fujii C."/>
            <person name="Bowman C."/>
            <person name="Watthey L."/>
            <person name="Wallin E."/>
            <person name="Hayes W.S."/>
            <person name="Borodovsky M."/>
            <person name="Karp P.D."/>
            <person name="Smith H.O."/>
            <person name="Fraser C.M."/>
            <person name="Venter J.C."/>
        </authorList>
    </citation>
    <scope>NUCLEOTIDE SEQUENCE [LARGE SCALE GENOMIC DNA]</scope>
    <source>
        <strain>ATCC 700392 / 26695</strain>
    </source>
</reference>
<reference key="2">
    <citation type="journal article" date="2009" name="PLoS ONE">
        <title>The dif/Xer recombination systems in proteobacteria.</title>
        <authorList>
            <person name="Carnoy C."/>
            <person name="Roten C.A."/>
        </authorList>
    </citation>
    <scope>NOMENCLATURE</scope>
</reference>
<reference key="3">
    <citation type="journal article" date="2012" name="PLoS ONE">
        <title>Xer recombinase and genome integrity in Helicobacter pylori, a pathogen without topoisomerase IV.</title>
        <authorList>
            <person name="Debowski A.W."/>
            <person name="Carnoy C."/>
            <person name="Verbrugghe P."/>
            <person name="Nilsson H.O."/>
            <person name="Gauntlett J.C."/>
            <person name="Fulurija A."/>
            <person name="Camilleri T."/>
            <person name="Berg D.E."/>
            <person name="Marshall B.J."/>
            <person name="Benghezal M."/>
        </authorList>
    </citation>
    <scope>FUNCTION AS A RECOMBINASE</scope>
    <scope>ACTIVITY REGULATION</scope>
    <scope>DISRUPTION PHENOTYPE</scope>
    <source>
        <strain>ATCC 700392 / 26695</strain>
    </source>
</reference>
<accession>O25386</accession>
<dbReference type="EMBL" id="AE000511">
    <property type="protein sequence ID" value="AAD07734.1"/>
    <property type="molecule type" value="Genomic_DNA"/>
</dbReference>
<dbReference type="PIR" id="C64604">
    <property type="entry name" value="C64604"/>
</dbReference>
<dbReference type="RefSeq" id="NP_207469.1">
    <property type="nucleotide sequence ID" value="NC_000915.1"/>
</dbReference>
<dbReference type="RefSeq" id="WP_000682431.1">
    <property type="nucleotide sequence ID" value="NC_018939.1"/>
</dbReference>
<dbReference type="PDB" id="5JJV">
    <property type="method" value="X-ray"/>
    <property type="resolution" value="2.40 A"/>
    <property type="chains" value="A/B=1-362"/>
</dbReference>
<dbReference type="PDB" id="5JK0">
    <property type="method" value="X-ray"/>
    <property type="resolution" value="2.10 A"/>
    <property type="chains" value="A/B/C/D=1-362"/>
</dbReference>
<dbReference type="PDBsum" id="5JJV"/>
<dbReference type="PDBsum" id="5JK0"/>
<dbReference type="SMR" id="O25386"/>
<dbReference type="FunCoup" id="O25386">
    <property type="interactions" value="150"/>
</dbReference>
<dbReference type="STRING" id="85962.HP_0675"/>
<dbReference type="PaxDb" id="85962-C694_03485"/>
<dbReference type="EnsemblBacteria" id="AAD07734">
    <property type="protein sequence ID" value="AAD07734"/>
    <property type="gene ID" value="HP_0675"/>
</dbReference>
<dbReference type="KEGG" id="heo:C694_03485"/>
<dbReference type="KEGG" id="hpy:HP_0675"/>
<dbReference type="PATRIC" id="fig|85962.47.peg.724"/>
<dbReference type="eggNOG" id="COG4974">
    <property type="taxonomic scope" value="Bacteria"/>
</dbReference>
<dbReference type="InParanoid" id="O25386"/>
<dbReference type="OrthoDB" id="9801717at2"/>
<dbReference type="PhylomeDB" id="O25386"/>
<dbReference type="Proteomes" id="UP000000429">
    <property type="component" value="Chromosome"/>
</dbReference>
<dbReference type="GO" id="GO:0005737">
    <property type="term" value="C:cytoplasm"/>
    <property type="evidence" value="ECO:0007669"/>
    <property type="project" value="UniProtKB-SubCell"/>
</dbReference>
<dbReference type="GO" id="GO:0003677">
    <property type="term" value="F:DNA binding"/>
    <property type="evidence" value="ECO:0007669"/>
    <property type="project" value="UniProtKB-KW"/>
</dbReference>
<dbReference type="GO" id="GO:0009009">
    <property type="term" value="F:site-specific recombinase activity"/>
    <property type="evidence" value="ECO:0000318"/>
    <property type="project" value="GO_Central"/>
</dbReference>
<dbReference type="GO" id="GO:0009037">
    <property type="term" value="F:tyrosine-based site-specific recombinase activity"/>
    <property type="evidence" value="ECO:0007669"/>
    <property type="project" value="UniProtKB-UniRule"/>
</dbReference>
<dbReference type="GO" id="GO:0051301">
    <property type="term" value="P:cell division"/>
    <property type="evidence" value="ECO:0007669"/>
    <property type="project" value="UniProtKB-KW"/>
</dbReference>
<dbReference type="GO" id="GO:0007059">
    <property type="term" value="P:chromosome segregation"/>
    <property type="evidence" value="ECO:0000318"/>
    <property type="project" value="GO_Central"/>
</dbReference>
<dbReference type="GO" id="GO:0006310">
    <property type="term" value="P:DNA recombination"/>
    <property type="evidence" value="ECO:0000318"/>
    <property type="project" value="GO_Central"/>
</dbReference>
<dbReference type="Gene3D" id="1.10.443.10">
    <property type="entry name" value="Intergrase catalytic core"/>
    <property type="match status" value="1"/>
</dbReference>
<dbReference type="HAMAP" id="MF_02054">
    <property type="entry name" value="Recomb_XerH"/>
    <property type="match status" value="1"/>
</dbReference>
<dbReference type="InterPro" id="IPR044068">
    <property type="entry name" value="CB"/>
</dbReference>
<dbReference type="InterPro" id="IPR011010">
    <property type="entry name" value="DNA_brk_join_enz"/>
</dbReference>
<dbReference type="InterPro" id="IPR013762">
    <property type="entry name" value="Integrase-like_cat_sf"/>
</dbReference>
<dbReference type="InterPro" id="IPR002104">
    <property type="entry name" value="Integrase_catalytic"/>
</dbReference>
<dbReference type="InterPro" id="IPR050090">
    <property type="entry name" value="Tyrosine_recombinase_XerCD"/>
</dbReference>
<dbReference type="InterPro" id="IPR041308">
    <property type="entry name" value="Xer_N"/>
</dbReference>
<dbReference type="InterPro" id="IPR033683">
    <property type="entry name" value="XerH"/>
</dbReference>
<dbReference type="PANTHER" id="PTHR30349">
    <property type="entry name" value="PHAGE INTEGRASE-RELATED"/>
    <property type="match status" value="1"/>
</dbReference>
<dbReference type="PANTHER" id="PTHR30349:SF64">
    <property type="entry name" value="PROPHAGE INTEGRASE INTD-RELATED"/>
    <property type="match status" value="1"/>
</dbReference>
<dbReference type="Pfam" id="PF18644">
    <property type="entry name" value="Phage_int_SAM_6"/>
    <property type="match status" value="1"/>
</dbReference>
<dbReference type="Pfam" id="PF00589">
    <property type="entry name" value="Phage_integrase"/>
    <property type="match status" value="1"/>
</dbReference>
<dbReference type="SUPFAM" id="SSF56349">
    <property type="entry name" value="DNA breaking-rejoining enzymes"/>
    <property type="match status" value="1"/>
</dbReference>
<dbReference type="PROSITE" id="PS51900">
    <property type="entry name" value="CB"/>
    <property type="match status" value="1"/>
</dbReference>
<dbReference type="PROSITE" id="PS51898">
    <property type="entry name" value="TYR_RECOMBINASE"/>
    <property type="match status" value="1"/>
</dbReference>
<keyword id="KW-0002">3D-structure</keyword>
<keyword id="KW-0131">Cell cycle</keyword>
<keyword id="KW-0132">Cell division</keyword>
<keyword id="KW-0159">Chromosome partition</keyword>
<keyword id="KW-0963">Cytoplasm</keyword>
<keyword id="KW-0229">DNA integration</keyword>
<keyword id="KW-0233">DNA recombination</keyword>
<keyword id="KW-0238">DNA-binding</keyword>
<keyword id="KW-1185">Reference proteome</keyword>
<sequence>MKHPLEELKDPTENLLLWIGRFLRYKCTSLSNSQVKDQNKVFECLNELNQACSSSQLEKVCKKARNAGLLGINTYALPLLKFHEYFSKARLITERLAFNSLKNIDEVMLAEFLSVYTGGLSLATKKNYRIALLGLFSYIDKQNQDENEKSYIYNITLKNISGVNQSAGNKLPTHLNNEELEKFLESIDKIEMSAKVRARNRLLIKIIVFTGMRSNEALQLKIKDFTLENGCYTILIKGKGDKYRAVMLKAFHIESLLKEWLIERELYPVKNDLLFCNQKGSALTQAYLYKQVERIINFAGLRREKNGAHMLRHSFATLLYQKRHDLILVQEALGHASLNTSRIYTHFDKQRLEEAASIWEEN</sequence>
<feature type="chain" id="PRO_0000435726" description="Tyrosine recombinase XerH">
    <location>
        <begin position="1"/>
        <end position="362"/>
    </location>
</feature>
<feature type="domain" description="Core-binding (CB)" evidence="3">
    <location>
        <begin position="43"/>
        <end position="140"/>
    </location>
</feature>
<feature type="domain" description="Tyr recombinase" evidence="2">
    <location>
        <begin position="170"/>
        <end position="357"/>
    </location>
</feature>
<feature type="active site" evidence="2">
    <location>
        <position position="213"/>
    </location>
</feature>
<feature type="active site" evidence="2">
    <location>
        <position position="239"/>
    </location>
</feature>
<feature type="active site" evidence="2">
    <location>
        <position position="309"/>
    </location>
</feature>
<feature type="active site" evidence="2">
    <location>
        <position position="312"/>
    </location>
</feature>
<feature type="active site" evidence="2">
    <location>
        <position position="335"/>
    </location>
</feature>
<feature type="active site" description="O-(3'-phospho-DNA)-tyrosine intermediate" evidence="2">
    <location>
        <position position="344"/>
    </location>
</feature>
<feature type="helix" evidence="8">
    <location>
        <begin position="11"/>
        <end position="29"/>
    </location>
</feature>
<feature type="helix" evidence="8">
    <location>
        <begin position="38"/>
        <end position="49"/>
    </location>
</feature>
<feature type="helix" evidence="8">
    <location>
        <begin position="54"/>
        <end position="66"/>
    </location>
</feature>
<feature type="helix" evidence="8">
    <location>
        <begin position="70"/>
        <end position="72"/>
    </location>
</feature>
<feature type="helix" evidence="8">
    <location>
        <begin position="73"/>
        <end position="87"/>
    </location>
</feature>
<feature type="helix" evidence="8">
    <location>
        <begin position="101"/>
        <end position="103"/>
    </location>
</feature>
<feature type="helix" evidence="8">
    <location>
        <begin position="106"/>
        <end position="116"/>
    </location>
</feature>
<feature type="turn" evidence="8">
    <location>
        <begin position="117"/>
        <end position="119"/>
    </location>
</feature>
<feature type="helix" evidence="8">
    <location>
        <begin position="122"/>
        <end position="142"/>
    </location>
</feature>
<feature type="helix" evidence="8">
    <location>
        <begin position="177"/>
        <end position="189"/>
    </location>
</feature>
<feature type="turn" evidence="8">
    <location>
        <begin position="194"/>
        <end position="196"/>
    </location>
</feature>
<feature type="helix" evidence="8">
    <location>
        <begin position="197"/>
        <end position="210"/>
    </location>
</feature>
<feature type="helix" evidence="8">
    <location>
        <begin position="214"/>
        <end position="218"/>
    </location>
</feature>
<feature type="helix" evidence="8">
    <location>
        <begin position="222"/>
        <end position="224"/>
    </location>
</feature>
<feature type="strand" evidence="8">
    <location>
        <begin position="225"/>
        <end position="228"/>
    </location>
</feature>
<feature type="strand" evidence="8">
    <location>
        <begin position="231"/>
        <end position="237"/>
    </location>
</feature>
<feature type="helix" evidence="8">
    <location>
        <begin position="239"/>
        <end position="241"/>
    </location>
</feature>
<feature type="strand" evidence="8">
    <location>
        <begin position="243"/>
        <end position="249"/>
    </location>
</feature>
<feature type="helix" evidence="8">
    <location>
        <begin position="250"/>
        <end position="252"/>
    </location>
</feature>
<feature type="helix" evidence="8">
    <location>
        <begin position="254"/>
        <end position="264"/>
    </location>
</feature>
<feature type="strand" evidence="8">
    <location>
        <begin position="273"/>
        <end position="275"/>
    </location>
</feature>
<feature type="helix" evidence="8">
    <location>
        <begin position="285"/>
        <end position="298"/>
    </location>
</feature>
<feature type="helix" evidence="8">
    <location>
        <begin position="308"/>
        <end position="323"/>
    </location>
</feature>
<feature type="helix" evidence="8">
    <location>
        <begin position="326"/>
        <end position="333"/>
    </location>
</feature>
<feature type="helix" evidence="8">
    <location>
        <begin position="338"/>
        <end position="341"/>
    </location>
</feature>
<feature type="helix" evidence="8">
    <location>
        <begin position="342"/>
        <end position="344"/>
    </location>
</feature>
<feature type="helix" evidence="8">
    <location>
        <begin position="349"/>
        <end position="351"/>
    </location>
</feature>
<feature type="helix" evidence="8">
    <location>
        <begin position="352"/>
        <end position="356"/>
    </location>
</feature>
<feature type="turn" evidence="8">
    <location>
        <begin position="357"/>
        <end position="360"/>
    </location>
</feature>
<organism>
    <name type="scientific">Helicobacter pylori (strain ATCC 700392 / 26695)</name>
    <name type="common">Campylobacter pylori</name>
    <dbReference type="NCBI Taxonomy" id="85962"/>
    <lineage>
        <taxon>Bacteria</taxon>
        <taxon>Pseudomonadati</taxon>
        <taxon>Campylobacterota</taxon>
        <taxon>Epsilonproteobacteria</taxon>
        <taxon>Campylobacterales</taxon>
        <taxon>Helicobacteraceae</taxon>
        <taxon>Helicobacter</taxon>
    </lineage>
</organism>
<name>XERH_HELPY</name>
<proteinExistence type="evidence at protein level"/>
<protein>
    <recommendedName>
        <fullName evidence="1 6">Tyrosine recombinase XerH</fullName>
    </recommendedName>
</protein>
<gene>
    <name evidence="1 5" type="primary">xerH</name>
    <name evidence="7" type="ordered locus">HP_0675</name>
</gene>
<comment type="function">
    <text evidence="4">Site-specific tyrosine recombinase, which acts by catalyzing the cutting and rejoining of the recombining DNA molecules. Involved in chromosome segregation. May contribute to chromosome decatenation.</text>
</comment>
<comment type="activity regulation">
    <text evidence="4">FtsK is required for recombination.</text>
</comment>
<comment type="subcellular location">
    <subcellularLocation>
        <location evidence="1 6">Cytoplasm</location>
    </subcellularLocation>
</comment>
<comment type="disruption phenotype">
    <text evidence="4">Deletion blocks difH recombination. Deletion mutant shows impaired chromosome segregation, slight growth defect, UV and ciprofloxacin susceptibility, resistance to oxidative stress and inability to colonize mice.</text>
</comment>
<comment type="similarity">
    <text evidence="1 6">Belongs to the 'phage' integrase family. XerH subfamily.</text>
</comment>